<protein>
    <recommendedName>
        <fullName evidence="1">3-methyl-2-oxobutanoate hydroxymethyltransferase</fullName>
        <ecNumber evidence="1">2.1.2.11</ecNumber>
    </recommendedName>
    <alternativeName>
        <fullName evidence="1">Ketopantoate hydroxymethyltransferase</fullName>
        <shortName evidence="1">KPHMT</shortName>
    </alternativeName>
</protein>
<comment type="function">
    <text evidence="1">Catalyzes the reversible reaction in which hydroxymethyl group from 5,10-methylenetetrahydrofolate is transferred onto alpha-ketoisovalerate to form ketopantoate.</text>
</comment>
<comment type="catalytic activity">
    <reaction evidence="1">
        <text>3-methyl-2-oxobutanoate + (6R)-5,10-methylene-5,6,7,8-tetrahydrofolate + H2O = 2-dehydropantoate + (6S)-5,6,7,8-tetrahydrofolate</text>
        <dbReference type="Rhea" id="RHEA:11824"/>
        <dbReference type="ChEBI" id="CHEBI:11561"/>
        <dbReference type="ChEBI" id="CHEBI:11851"/>
        <dbReference type="ChEBI" id="CHEBI:15377"/>
        <dbReference type="ChEBI" id="CHEBI:15636"/>
        <dbReference type="ChEBI" id="CHEBI:57453"/>
        <dbReference type="EC" id="2.1.2.11"/>
    </reaction>
</comment>
<comment type="cofactor">
    <cofactor evidence="1">
        <name>Mg(2+)</name>
        <dbReference type="ChEBI" id="CHEBI:18420"/>
    </cofactor>
    <text evidence="1">Binds 1 Mg(2+) ion per subunit.</text>
</comment>
<comment type="pathway">
    <text evidence="1">Cofactor biosynthesis; (R)-pantothenate biosynthesis; (R)-pantoate from 3-methyl-2-oxobutanoate: step 1/2.</text>
</comment>
<comment type="subunit">
    <text evidence="1">Homodecamer; pentamer of dimers.</text>
</comment>
<comment type="subcellular location">
    <subcellularLocation>
        <location evidence="1">Cytoplasm</location>
    </subcellularLocation>
</comment>
<comment type="similarity">
    <text evidence="1">Belongs to the PanB family.</text>
</comment>
<sequence>MKPVTLSTLNRYKQEKKKFATITAYDASFARLFANEGIPAMLIGDSLGMTLQGHDSTLPVTVEQIAYHTRCVRAGAPNAFLIADMPFMSYSTPEQACLNAAILMQAGANMVKIEGGSWLIPTVKMLTERAVPVCIHLGLTPQSVNVFGGYKVQGREEAAAEQLKQDAMALEAAGAQLAVLECVPVSVAKTITGSLNIPVIGIGAGNVTDGQILVMHDLLGLTPNAPKFSKNFLQEAGSLPEAVRLYVQQVEQKLFPQEQHSFN</sequence>
<reference key="1">
    <citation type="journal article" date="2008" name="J. Bacteriol.">
        <title>Complete genome sequence of uropathogenic Proteus mirabilis, a master of both adherence and motility.</title>
        <authorList>
            <person name="Pearson M.M."/>
            <person name="Sebaihia M."/>
            <person name="Churcher C."/>
            <person name="Quail M.A."/>
            <person name="Seshasayee A.S."/>
            <person name="Luscombe N.M."/>
            <person name="Abdellah Z."/>
            <person name="Arrosmith C."/>
            <person name="Atkin B."/>
            <person name="Chillingworth T."/>
            <person name="Hauser H."/>
            <person name="Jagels K."/>
            <person name="Moule S."/>
            <person name="Mungall K."/>
            <person name="Norbertczak H."/>
            <person name="Rabbinowitsch E."/>
            <person name="Walker D."/>
            <person name="Whithead S."/>
            <person name="Thomson N.R."/>
            <person name="Rather P.N."/>
            <person name="Parkhill J."/>
            <person name="Mobley H.L.T."/>
        </authorList>
    </citation>
    <scope>NUCLEOTIDE SEQUENCE [LARGE SCALE GENOMIC DNA]</scope>
    <source>
        <strain>HI4320</strain>
    </source>
</reference>
<keyword id="KW-0963">Cytoplasm</keyword>
<keyword id="KW-0460">Magnesium</keyword>
<keyword id="KW-0479">Metal-binding</keyword>
<keyword id="KW-0566">Pantothenate biosynthesis</keyword>
<keyword id="KW-1185">Reference proteome</keyword>
<keyword id="KW-0808">Transferase</keyword>
<dbReference type="EC" id="2.1.2.11" evidence="1"/>
<dbReference type="EMBL" id="AM942759">
    <property type="protein sequence ID" value="CAR40576.1"/>
    <property type="molecule type" value="Genomic_DNA"/>
</dbReference>
<dbReference type="RefSeq" id="WP_004247283.1">
    <property type="nucleotide sequence ID" value="NC_010554.1"/>
</dbReference>
<dbReference type="SMR" id="B4EUD3"/>
<dbReference type="EnsemblBacteria" id="CAR40576">
    <property type="protein sequence ID" value="CAR40576"/>
    <property type="gene ID" value="PMI0196"/>
</dbReference>
<dbReference type="GeneID" id="6803541"/>
<dbReference type="KEGG" id="pmr:PMI0196"/>
<dbReference type="eggNOG" id="COG0413">
    <property type="taxonomic scope" value="Bacteria"/>
</dbReference>
<dbReference type="HOGENOM" id="CLU_036645_1_0_6"/>
<dbReference type="UniPathway" id="UPA00028">
    <property type="reaction ID" value="UER00003"/>
</dbReference>
<dbReference type="Proteomes" id="UP000008319">
    <property type="component" value="Chromosome"/>
</dbReference>
<dbReference type="GO" id="GO:0005737">
    <property type="term" value="C:cytoplasm"/>
    <property type="evidence" value="ECO:0007669"/>
    <property type="project" value="UniProtKB-SubCell"/>
</dbReference>
<dbReference type="GO" id="GO:0003864">
    <property type="term" value="F:3-methyl-2-oxobutanoate hydroxymethyltransferase activity"/>
    <property type="evidence" value="ECO:0007669"/>
    <property type="project" value="UniProtKB-UniRule"/>
</dbReference>
<dbReference type="GO" id="GO:0000287">
    <property type="term" value="F:magnesium ion binding"/>
    <property type="evidence" value="ECO:0007669"/>
    <property type="project" value="TreeGrafter"/>
</dbReference>
<dbReference type="GO" id="GO:0015940">
    <property type="term" value="P:pantothenate biosynthetic process"/>
    <property type="evidence" value="ECO:0007669"/>
    <property type="project" value="UniProtKB-UniRule"/>
</dbReference>
<dbReference type="CDD" id="cd06557">
    <property type="entry name" value="KPHMT-like"/>
    <property type="match status" value="1"/>
</dbReference>
<dbReference type="FunFam" id="3.20.20.60:FF:000003">
    <property type="entry name" value="3-methyl-2-oxobutanoate hydroxymethyltransferase"/>
    <property type="match status" value="1"/>
</dbReference>
<dbReference type="Gene3D" id="3.20.20.60">
    <property type="entry name" value="Phosphoenolpyruvate-binding domains"/>
    <property type="match status" value="1"/>
</dbReference>
<dbReference type="HAMAP" id="MF_00156">
    <property type="entry name" value="PanB"/>
    <property type="match status" value="1"/>
</dbReference>
<dbReference type="InterPro" id="IPR003700">
    <property type="entry name" value="Pantoate_hydroxy_MeTrfase"/>
</dbReference>
<dbReference type="InterPro" id="IPR015813">
    <property type="entry name" value="Pyrv/PenolPyrv_kinase-like_dom"/>
</dbReference>
<dbReference type="InterPro" id="IPR040442">
    <property type="entry name" value="Pyrv_kinase-like_dom_sf"/>
</dbReference>
<dbReference type="NCBIfam" id="TIGR00222">
    <property type="entry name" value="panB"/>
    <property type="match status" value="1"/>
</dbReference>
<dbReference type="NCBIfam" id="NF001452">
    <property type="entry name" value="PRK00311.1"/>
    <property type="match status" value="1"/>
</dbReference>
<dbReference type="PANTHER" id="PTHR20881">
    <property type="entry name" value="3-METHYL-2-OXOBUTANOATE HYDROXYMETHYLTRANSFERASE"/>
    <property type="match status" value="1"/>
</dbReference>
<dbReference type="PANTHER" id="PTHR20881:SF0">
    <property type="entry name" value="3-METHYL-2-OXOBUTANOATE HYDROXYMETHYLTRANSFERASE"/>
    <property type="match status" value="1"/>
</dbReference>
<dbReference type="Pfam" id="PF02548">
    <property type="entry name" value="Pantoate_transf"/>
    <property type="match status" value="1"/>
</dbReference>
<dbReference type="PIRSF" id="PIRSF000388">
    <property type="entry name" value="Pantoate_hydroxy_MeTrfase"/>
    <property type="match status" value="1"/>
</dbReference>
<dbReference type="SUPFAM" id="SSF51621">
    <property type="entry name" value="Phosphoenolpyruvate/pyruvate domain"/>
    <property type="match status" value="1"/>
</dbReference>
<proteinExistence type="inferred from homology"/>
<feature type="chain" id="PRO_1000096993" description="3-methyl-2-oxobutanoate hydroxymethyltransferase">
    <location>
        <begin position="1"/>
        <end position="263"/>
    </location>
</feature>
<feature type="active site" description="Proton acceptor" evidence="1">
    <location>
        <position position="181"/>
    </location>
</feature>
<feature type="binding site" evidence="1">
    <location>
        <begin position="45"/>
        <end position="46"/>
    </location>
    <ligand>
        <name>3-methyl-2-oxobutanoate</name>
        <dbReference type="ChEBI" id="CHEBI:11851"/>
    </ligand>
</feature>
<feature type="binding site" evidence="1">
    <location>
        <position position="45"/>
    </location>
    <ligand>
        <name>Mg(2+)</name>
        <dbReference type="ChEBI" id="CHEBI:18420"/>
    </ligand>
</feature>
<feature type="binding site" evidence="1">
    <location>
        <position position="84"/>
    </location>
    <ligand>
        <name>3-methyl-2-oxobutanoate</name>
        <dbReference type="ChEBI" id="CHEBI:11851"/>
    </ligand>
</feature>
<feature type="binding site" evidence="1">
    <location>
        <position position="84"/>
    </location>
    <ligand>
        <name>Mg(2+)</name>
        <dbReference type="ChEBI" id="CHEBI:18420"/>
    </ligand>
</feature>
<feature type="binding site" evidence="1">
    <location>
        <position position="112"/>
    </location>
    <ligand>
        <name>3-methyl-2-oxobutanoate</name>
        <dbReference type="ChEBI" id="CHEBI:11851"/>
    </ligand>
</feature>
<feature type="binding site" evidence="1">
    <location>
        <position position="114"/>
    </location>
    <ligand>
        <name>Mg(2+)</name>
        <dbReference type="ChEBI" id="CHEBI:18420"/>
    </ligand>
</feature>
<organism>
    <name type="scientific">Proteus mirabilis (strain HI4320)</name>
    <dbReference type="NCBI Taxonomy" id="529507"/>
    <lineage>
        <taxon>Bacteria</taxon>
        <taxon>Pseudomonadati</taxon>
        <taxon>Pseudomonadota</taxon>
        <taxon>Gammaproteobacteria</taxon>
        <taxon>Enterobacterales</taxon>
        <taxon>Morganellaceae</taxon>
        <taxon>Proteus</taxon>
    </lineage>
</organism>
<gene>
    <name evidence="1" type="primary">panB</name>
    <name type="ordered locus">PMI0196</name>
</gene>
<accession>B4EUD3</accession>
<evidence type="ECO:0000255" key="1">
    <source>
        <dbReference type="HAMAP-Rule" id="MF_00156"/>
    </source>
</evidence>
<name>PANB_PROMH</name>